<gene>
    <name evidence="1" type="primary">rpsK</name>
    <name type="ordered locus">Smal_0778</name>
</gene>
<keyword id="KW-0687">Ribonucleoprotein</keyword>
<keyword id="KW-0689">Ribosomal protein</keyword>
<keyword id="KW-0694">RNA-binding</keyword>
<keyword id="KW-0699">rRNA-binding</keyword>
<evidence type="ECO:0000255" key="1">
    <source>
        <dbReference type="HAMAP-Rule" id="MF_01310"/>
    </source>
</evidence>
<evidence type="ECO:0000305" key="2"/>
<comment type="function">
    <text evidence="1">Located on the platform of the 30S subunit, it bridges several disparate RNA helices of the 16S rRNA. Forms part of the Shine-Dalgarno cleft in the 70S ribosome.</text>
</comment>
<comment type="subunit">
    <text evidence="1">Part of the 30S ribosomal subunit. Interacts with proteins S7 and S18. Binds to IF-3.</text>
</comment>
<comment type="similarity">
    <text evidence="1">Belongs to the universal ribosomal protein uS11 family.</text>
</comment>
<name>RS11_STRM5</name>
<reference key="1">
    <citation type="submission" date="2008-06" db="EMBL/GenBank/DDBJ databases">
        <title>Complete sequence of Stenotrophomonas maltophilia R551-3.</title>
        <authorList>
            <consortium name="US DOE Joint Genome Institute"/>
            <person name="Lucas S."/>
            <person name="Copeland A."/>
            <person name="Lapidus A."/>
            <person name="Glavina del Rio T."/>
            <person name="Dalin E."/>
            <person name="Tice H."/>
            <person name="Pitluck S."/>
            <person name="Chain P."/>
            <person name="Malfatti S."/>
            <person name="Shin M."/>
            <person name="Vergez L."/>
            <person name="Lang D."/>
            <person name="Schmutz J."/>
            <person name="Larimer F."/>
            <person name="Land M."/>
            <person name="Hauser L."/>
            <person name="Kyrpides N."/>
            <person name="Mikhailova N."/>
            <person name="Taghavi S."/>
            <person name="Monchy S."/>
            <person name="Newman L."/>
            <person name="Vangronsveld J."/>
            <person name="van der Lelie D."/>
            <person name="Richardson P."/>
        </authorList>
    </citation>
    <scope>NUCLEOTIDE SEQUENCE [LARGE SCALE GENOMIC DNA]</scope>
    <source>
        <strain>R551-3</strain>
    </source>
</reference>
<proteinExistence type="inferred from homology"/>
<feature type="chain" id="PRO_1000141144" description="Small ribosomal subunit protein uS11">
    <location>
        <begin position="1"/>
        <end position="129"/>
    </location>
</feature>
<dbReference type="EMBL" id="CP001111">
    <property type="protein sequence ID" value="ACF50483.1"/>
    <property type="molecule type" value="Genomic_DNA"/>
</dbReference>
<dbReference type="RefSeq" id="WP_004145443.1">
    <property type="nucleotide sequence ID" value="NC_011071.1"/>
</dbReference>
<dbReference type="SMR" id="B4SLH3"/>
<dbReference type="STRING" id="391008.Smal_0778"/>
<dbReference type="GeneID" id="97259956"/>
<dbReference type="KEGG" id="smt:Smal_0778"/>
<dbReference type="eggNOG" id="COG0100">
    <property type="taxonomic scope" value="Bacteria"/>
</dbReference>
<dbReference type="HOGENOM" id="CLU_072439_5_0_6"/>
<dbReference type="OrthoDB" id="9806415at2"/>
<dbReference type="Proteomes" id="UP000001867">
    <property type="component" value="Chromosome"/>
</dbReference>
<dbReference type="GO" id="GO:1990904">
    <property type="term" value="C:ribonucleoprotein complex"/>
    <property type="evidence" value="ECO:0007669"/>
    <property type="project" value="UniProtKB-KW"/>
</dbReference>
<dbReference type="GO" id="GO:0005840">
    <property type="term" value="C:ribosome"/>
    <property type="evidence" value="ECO:0007669"/>
    <property type="project" value="UniProtKB-KW"/>
</dbReference>
<dbReference type="GO" id="GO:0019843">
    <property type="term" value="F:rRNA binding"/>
    <property type="evidence" value="ECO:0007669"/>
    <property type="project" value="UniProtKB-UniRule"/>
</dbReference>
<dbReference type="GO" id="GO:0003735">
    <property type="term" value="F:structural constituent of ribosome"/>
    <property type="evidence" value="ECO:0007669"/>
    <property type="project" value="InterPro"/>
</dbReference>
<dbReference type="GO" id="GO:0006412">
    <property type="term" value="P:translation"/>
    <property type="evidence" value="ECO:0007669"/>
    <property type="project" value="UniProtKB-UniRule"/>
</dbReference>
<dbReference type="FunFam" id="3.30.420.80:FF:000001">
    <property type="entry name" value="30S ribosomal protein S11"/>
    <property type="match status" value="1"/>
</dbReference>
<dbReference type="Gene3D" id="3.30.420.80">
    <property type="entry name" value="Ribosomal protein S11"/>
    <property type="match status" value="1"/>
</dbReference>
<dbReference type="HAMAP" id="MF_01310">
    <property type="entry name" value="Ribosomal_uS11"/>
    <property type="match status" value="1"/>
</dbReference>
<dbReference type="InterPro" id="IPR001971">
    <property type="entry name" value="Ribosomal_uS11"/>
</dbReference>
<dbReference type="InterPro" id="IPR019981">
    <property type="entry name" value="Ribosomal_uS11_bac-type"/>
</dbReference>
<dbReference type="InterPro" id="IPR018102">
    <property type="entry name" value="Ribosomal_uS11_CS"/>
</dbReference>
<dbReference type="InterPro" id="IPR036967">
    <property type="entry name" value="Ribosomal_uS11_sf"/>
</dbReference>
<dbReference type="NCBIfam" id="NF003698">
    <property type="entry name" value="PRK05309.1"/>
    <property type="match status" value="1"/>
</dbReference>
<dbReference type="NCBIfam" id="TIGR03632">
    <property type="entry name" value="uS11_bact"/>
    <property type="match status" value="1"/>
</dbReference>
<dbReference type="PANTHER" id="PTHR11759">
    <property type="entry name" value="40S RIBOSOMAL PROTEIN S14/30S RIBOSOMAL PROTEIN S11"/>
    <property type="match status" value="1"/>
</dbReference>
<dbReference type="Pfam" id="PF00411">
    <property type="entry name" value="Ribosomal_S11"/>
    <property type="match status" value="1"/>
</dbReference>
<dbReference type="PIRSF" id="PIRSF002131">
    <property type="entry name" value="Ribosomal_S11"/>
    <property type="match status" value="1"/>
</dbReference>
<dbReference type="SUPFAM" id="SSF53137">
    <property type="entry name" value="Translational machinery components"/>
    <property type="match status" value="1"/>
</dbReference>
<dbReference type="PROSITE" id="PS00054">
    <property type="entry name" value="RIBOSOMAL_S11"/>
    <property type="match status" value="1"/>
</dbReference>
<protein>
    <recommendedName>
        <fullName evidence="1">Small ribosomal subunit protein uS11</fullName>
    </recommendedName>
    <alternativeName>
        <fullName evidence="2">30S ribosomal protein S11</fullName>
    </alternativeName>
</protein>
<accession>B4SLH3</accession>
<sequence>MAKPAAKTKKKIKRVVTDGVAHVHASFNNTIVTITDRQGNALSWATSGGAGFRGSRKSTPFAAQVAAEKAGRAALDYGVKSLEVRIKGPGPGRESAVRSLNNVGYKITNIIDVTPIPHNGCRPPKKRRV</sequence>
<organism>
    <name type="scientific">Stenotrophomonas maltophilia (strain R551-3)</name>
    <dbReference type="NCBI Taxonomy" id="391008"/>
    <lineage>
        <taxon>Bacteria</taxon>
        <taxon>Pseudomonadati</taxon>
        <taxon>Pseudomonadota</taxon>
        <taxon>Gammaproteobacteria</taxon>
        <taxon>Lysobacterales</taxon>
        <taxon>Lysobacteraceae</taxon>
        <taxon>Stenotrophomonas</taxon>
        <taxon>Stenotrophomonas maltophilia group</taxon>
    </lineage>
</organism>